<name>UPA1_MYCMD</name>
<feature type="chain" id="PRO_0000454340" description="FYVE zinc finger domain protein UPA1">
    <location>
        <begin position="1"/>
        <end position="1287"/>
    </location>
</feature>
<feature type="repeat" description="ANK 1" evidence="1">
    <location>
        <begin position="366"/>
        <end position="395"/>
    </location>
</feature>
<feature type="repeat" description="ANK 2" evidence="1">
    <location>
        <begin position="400"/>
        <end position="429"/>
    </location>
</feature>
<feature type="repeat" description="ANK 3" evidence="1">
    <location>
        <begin position="433"/>
        <end position="463"/>
    </location>
</feature>
<feature type="repeat" description="ANK 4" evidence="1">
    <location>
        <begin position="468"/>
        <end position="497"/>
    </location>
</feature>
<feature type="zinc finger region" description="FYVE-type" evidence="2">
    <location>
        <begin position="1055"/>
        <end position="1129"/>
    </location>
</feature>
<feature type="zinc finger region" description="RING-type; atypical" evidence="3">
    <location>
        <begin position="1243"/>
        <end position="1283"/>
    </location>
</feature>
<feature type="region of interest" description="Disordered" evidence="4">
    <location>
        <begin position="1"/>
        <end position="298"/>
    </location>
</feature>
<feature type="region of interest" description="Disordered" evidence="4">
    <location>
        <begin position="582"/>
        <end position="630"/>
    </location>
</feature>
<feature type="region of interest" description="Disordered" evidence="4">
    <location>
        <begin position="643"/>
        <end position="697"/>
    </location>
</feature>
<feature type="region of interest" description="Disordered" evidence="4">
    <location>
        <begin position="934"/>
        <end position="960"/>
    </location>
</feature>
<feature type="region of interest" description="Disordered" evidence="4">
    <location>
        <begin position="977"/>
        <end position="1005"/>
    </location>
</feature>
<feature type="short sequence motif" description="PAM2" evidence="5">
    <location>
        <begin position="128"/>
        <end position="144"/>
    </location>
</feature>
<feature type="short sequence motif" description="PAM2L 1" evidence="5">
    <location>
        <begin position="239"/>
        <end position="253"/>
    </location>
</feature>
<feature type="short sequence motif" description="PAM2L 2" evidence="5">
    <location>
        <begin position="941"/>
        <end position="960"/>
    </location>
</feature>
<feature type="compositionally biased region" description="Low complexity" evidence="4">
    <location>
        <begin position="86"/>
        <end position="99"/>
    </location>
</feature>
<feature type="compositionally biased region" description="Polar residues" evidence="4">
    <location>
        <begin position="115"/>
        <end position="136"/>
    </location>
</feature>
<feature type="compositionally biased region" description="Basic and acidic residues" evidence="4">
    <location>
        <begin position="177"/>
        <end position="187"/>
    </location>
</feature>
<feature type="compositionally biased region" description="Basic and acidic residues" evidence="4">
    <location>
        <begin position="201"/>
        <end position="211"/>
    </location>
</feature>
<feature type="compositionally biased region" description="Polar residues" evidence="4">
    <location>
        <begin position="212"/>
        <end position="235"/>
    </location>
</feature>
<feature type="compositionally biased region" description="Polar residues" evidence="4">
    <location>
        <begin position="255"/>
        <end position="294"/>
    </location>
</feature>
<feature type="compositionally biased region" description="Polar residues" evidence="4">
    <location>
        <begin position="674"/>
        <end position="695"/>
    </location>
</feature>
<feature type="compositionally biased region" description="Acidic residues" evidence="4">
    <location>
        <begin position="938"/>
        <end position="955"/>
    </location>
</feature>
<feature type="compositionally biased region" description="Low complexity" evidence="4">
    <location>
        <begin position="981"/>
        <end position="995"/>
    </location>
</feature>
<feature type="binding site" evidence="2">
    <location>
        <position position="1061"/>
    </location>
    <ligand>
        <name>Zn(2+)</name>
        <dbReference type="ChEBI" id="CHEBI:29105"/>
        <label>1</label>
    </ligand>
</feature>
<feature type="binding site" evidence="2">
    <location>
        <position position="1064"/>
    </location>
    <ligand>
        <name>Zn(2+)</name>
        <dbReference type="ChEBI" id="CHEBI:29105"/>
        <label>1</label>
    </ligand>
</feature>
<feature type="binding site" evidence="2">
    <location>
        <position position="1077"/>
    </location>
    <ligand>
        <name>Zn(2+)</name>
        <dbReference type="ChEBI" id="CHEBI:29105"/>
        <label>2</label>
    </ligand>
</feature>
<feature type="binding site" evidence="2">
    <location>
        <position position="1080"/>
    </location>
    <ligand>
        <name>Zn(2+)</name>
        <dbReference type="ChEBI" id="CHEBI:29105"/>
        <label>2</label>
    </ligand>
</feature>
<feature type="binding site" evidence="2">
    <location>
        <position position="1085"/>
    </location>
    <ligand>
        <name>Zn(2+)</name>
        <dbReference type="ChEBI" id="CHEBI:29105"/>
        <label>1</label>
    </ligand>
</feature>
<feature type="binding site" evidence="2">
    <location>
        <position position="1088"/>
    </location>
    <ligand>
        <name>Zn(2+)</name>
        <dbReference type="ChEBI" id="CHEBI:29105"/>
        <label>1</label>
    </ligand>
</feature>
<feature type="binding site" evidence="2">
    <location>
        <position position="1121"/>
    </location>
    <ligand>
        <name>Zn(2+)</name>
        <dbReference type="ChEBI" id="CHEBI:29105"/>
        <label>2</label>
    </ligand>
</feature>
<feature type="binding site" evidence="2">
    <location>
        <position position="1124"/>
    </location>
    <ligand>
        <name>Zn(2+)</name>
        <dbReference type="ChEBI" id="CHEBI:29105"/>
        <label>2</label>
    </ligand>
</feature>
<reference key="1">
    <citation type="journal article" date="2006" name="Nature">
        <title>Insights from the genome of the biotrophic fungal plant pathogen Ustilago maydis.</title>
        <authorList>
            <person name="Kaemper J."/>
            <person name="Kahmann R."/>
            <person name="Boelker M."/>
            <person name="Ma L.-J."/>
            <person name="Brefort T."/>
            <person name="Saville B.J."/>
            <person name="Banuett F."/>
            <person name="Kronstad J.W."/>
            <person name="Gold S.E."/>
            <person name="Mueller O."/>
            <person name="Perlin M.H."/>
            <person name="Woesten H.A.B."/>
            <person name="de Vries R."/>
            <person name="Ruiz-Herrera J."/>
            <person name="Reynaga-Pena C.G."/>
            <person name="Snetselaar K."/>
            <person name="McCann M."/>
            <person name="Perez-Martin J."/>
            <person name="Feldbruegge M."/>
            <person name="Basse C.W."/>
            <person name="Steinberg G."/>
            <person name="Ibeas J.I."/>
            <person name="Holloman W."/>
            <person name="Guzman P."/>
            <person name="Farman M.L."/>
            <person name="Stajich J.E."/>
            <person name="Sentandreu R."/>
            <person name="Gonzalez-Prieto J.M."/>
            <person name="Kennell J.C."/>
            <person name="Molina L."/>
            <person name="Schirawski J."/>
            <person name="Mendoza-Mendoza A."/>
            <person name="Greilinger D."/>
            <person name="Muench K."/>
            <person name="Roessel N."/>
            <person name="Scherer M."/>
            <person name="Vranes M."/>
            <person name="Ladendorf O."/>
            <person name="Vincon V."/>
            <person name="Fuchs U."/>
            <person name="Sandrock B."/>
            <person name="Meng S."/>
            <person name="Ho E.C.H."/>
            <person name="Cahill M.J."/>
            <person name="Boyce K.J."/>
            <person name="Klose J."/>
            <person name="Klosterman S.J."/>
            <person name="Deelstra H.J."/>
            <person name="Ortiz-Castellanos L."/>
            <person name="Li W."/>
            <person name="Sanchez-Alonso P."/>
            <person name="Schreier P.H."/>
            <person name="Haeuser-Hahn I."/>
            <person name="Vaupel M."/>
            <person name="Koopmann E."/>
            <person name="Friedrich G."/>
            <person name="Voss H."/>
            <person name="Schlueter T."/>
            <person name="Margolis J."/>
            <person name="Platt D."/>
            <person name="Swimmer C."/>
            <person name="Gnirke A."/>
            <person name="Chen F."/>
            <person name="Vysotskaia V."/>
            <person name="Mannhaupt G."/>
            <person name="Gueldener U."/>
            <person name="Muensterkoetter M."/>
            <person name="Haase D."/>
            <person name="Oesterheld M."/>
            <person name="Mewes H.-W."/>
            <person name="Mauceli E.W."/>
            <person name="DeCaprio D."/>
            <person name="Wade C.M."/>
            <person name="Butler J."/>
            <person name="Young S.K."/>
            <person name="Jaffe D.B."/>
            <person name="Calvo S.E."/>
            <person name="Nusbaum C."/>
            <person name="Galagan J.E."/>
            <person name="Birren B.W."/>
        </authorList>
    </citation>
    <scope>NUCLEOTIDE SEQUENCE [LARGE SCALE GENOMIC DNA]</scope>
    <source>
        <strain>DSM 14603 / FGSC 9021 / UM521</strain>
    </source>
</reference>
<reference key="2">
    <citation type="submission" date="2014-09" db="EMBL/GenBank/DDBJ databases">
        <authorList>
            <person name="Gueldener U."/>
            <person name="Muensterkoetter M."/>
            <person name="Walter M.C."/>
            <person name="Mannhaupt G."/>
            <person name="Kahmann R."/>
        </authorList>
    </citation>
    <scope>GENOME REANNOTATION</scope>
    <source>
        <strain>DSM 14603 / FGSC 9021 / UM521</strain>
    </source>
</reference>
<reference key="3">
    <citation type="journal article" date="2015" name="Elife">
        <title>A FYVE zinc finger domain protein specifically links mRNA transport to endosome trafficking.</title>
        <authorList>
            <person name="Pohlmann T."/>
            <person name="Baumann S."/>
            <person name="Haag C."/>
            <person name="Albrecht M."/>
            <person name="Feldbruegge M."/>
        </authorList>
    </citation>
    <scope>FUNCTION</scope>
    <scope>DISRUPTION PHENOTYPE</scope>
    <scope>DOMAIN</scope>
    <scope>SUBUNIT</scope>
    <scope>INTERACTION WITH PAB1 AND RRM4</scope>
    <scope>SUBCELLULAR LOCATION</scope>
</reference>
<reference key="4">
    <citation type="journal article" date="2017" name="PLoS Genet.">
        <title>The ESCRT regulator Did2 maintains the balance between long-distance endosomal transport and endocytic trafficking.</title>
        <authorList>
            <person name="Haag C."/>
            <person name="Pohlmann T."/>
            <person name="Feldbruegge M."/>
        </authorList>
    </citation>
    <scope>FUNCTION</scope>
    <scope>DISRUPTION PHENOTYPE</scope>
</reference>
<protein>
    <recommendedName>
        <fullName evidence="7">FYVE zinc finger domain protein UPA1</fullName>
    </recommendedName>
    <alternativeName>
        <fullName evidence="7">PAM2 domain-containing protein UPA1</fullName>
    </alternativeName>
</protein>
<keyword id="KW-0002">3D-structure</keyword>
<keyword id="KW-0040">ANK repeat</keyword>
<keyword id="KW-0963">Cytoplasm</keyword>
<keyword id="KW-0206">Cytoskeleton</keyword>
<keyword id="KW-0967">Endosome</keyword>
<keyword id="KW-0479">Metal-binding</keyword>
<keyword id="KW-0509">mRNA transport</keyword>
<keyword id="KW-1185">Reference proteome</keyword>
<keyword id="KW-0677">Repeat</keyword>
<keyword id="KW-0808">Transferase</keyword>
<keyword id="KW-0813">Transport</keyword>
<keyword id="KW-0833">Ubl conjugation pathway</keyword>
<keyword id="KW-0862">Zinc</keyword>
<keyword id="KW-0863">Zinc-finger</keyword>
<sequence>MTIPDPANIIHNDAGTASPHHIWADVGDSTSSSQHEATRSRSDDANGGASASMHAPQHVKANRAAQPTYDSSDLPSFGLSARLTRDSSSFGSKPSSSASDSRRPKFAPYEAENLWATSSTTSHPSKASQSTLSPNASVFKPSRSLQPNHFEPHAVANVHDFDDPLNSAYSSDTVSPRPDHAPLDHEQPQQPSALDPVAVSKVEEQRGDHSIPHQNGLVSAQAQTASDAVSTSKYTTEAADQEEDQDDFVYPGADSPSSGQAAVQDEQQAVTDSQTTKSLTKQESDPEASSTSLSAPAEAEHIVVGSAAEQSLTSSAPAETAVHIDYDTLAQLCSRGPLSDLQSFFHTAQESGLSMFSLSNDPNPGNGLVPLHFAAKDGKTDIVRWLITQAGAIVEMEDREGETALHKAAMAGKLSVASLLLSHGADANAQDADGWTALHNACSRGYLDLVRLLVDRGHAQIDVQGGRGAWTPLMNAASKGHLPVVRHLTAKYHADPFVRNAAGETAFDVAAATFEVYICEILERYEAERWNASKFTTSSPSRSGAIVPGRGPYEPLALHTTIPVILHENQRLDTRLQTLALNGGKPRWSSSSAARAHKPDRRSPSSMPPGPLAPSRTRHVPMRQDDVGLPTRSLPYKLRLRSRVGPAAARRRAAALAAQHTPNPQDCHDDDLASTPTPESVLQARRGTSSVNGASAQHADAESSHFWLCEWQLDTTHPLVDVEHGWQYAQSFDALDDKWSSQPPPPLERLLEGRGLSASVTRAITGGAGFANAQAEQEISSSSWVRRRRWIRVLRRRLDIEFGDDLEACEGATGAGAEHLVLSSESQSNGDGSHGLSTAAIMAAQEAAKSECSQLGPDADYVSRAKALAGPSAASGATPADAMGADRDELARRIARLVMANTELRAAFEDDDVERRSRAEELRKEYALQLGQLREAAGLDEDEDEDAADDDDDEFIYPNSYKDDGASVFTRLVNGETSGTLSRPSLSQRQSSAASMLRNSVAPSEAGTSLAAARSADLAANREFRVPTNEAPNKVVLRHGPTMREQNLQPQWQRDEEAKDCIGCGRHFTFFLRKHHCRRCGRIFCDACSSKRAQLRMAELVVDPSLPSMAASEVLAPTRVCNGCHAELQLPPQLQNMRGADAMMAASRSRGADEVSGRSILETQLEDGAFRSTLAPPSDVSSRASELTECPVCSTTLSALGGSEEQEAHVRNCLENGGGGSMQGGRYLVYKLPEDSPIVGKECSICMEDFVANSTIARLPCLCYFHRGCIDSWFKRGRECPVHARDW</sequence>
<proteinExistence type="evidence at protein level"/>
<dbReference type="EMBL" id="CM003144">
    <property type="protein sequence ID" value="KIS69564.1"/>
    <property type="molecule type" value="Genomic_DNA"/>
</dbReference>
<dbReference type="RefSeq" id="XP_011388912.1">
    <property type="nucleotide sequence ID" value="XM_011390610.1"/>
</dbReference>
<dbReference type="PDB" id="8S6U">
    <property type="method" value="X-ray"/>
    <property type="resolution" value="2.00 A"/>
    <property type="chains" value="C/D=130-144"/>
</dbReference>
<dbReference type="PDBsum" id="8S6U"/>
<dbReference type="SMR" id="A0A0D1E015"/>
<dbReference type="STRING" id="237631.A0A0D1E015"/>
<dbReference type="EnsemblFungi" id="KIS69564">
    <property type="protein sequence ID" value="KIS69564"/>
    <property type="gene ID" value="UMAG_12183"/>
</dbReference>
<dbReference type="GeneID" id="23567936"/>
<dbReference type="KEGG" id="uma:UMAG_12183"/>
<dbReference type="VEuPathDB" id="FungiDB:UMAG_12183"/>
<dbReference type="eggNOG" id="KOG1729">
    <property type="taxonomic scope" value="Eukaryota"/>
</dbReference>
<dbReference type="eggNOG" id="KOG4177">
    <property type="taxonomic scope" value="Eukaryota"/>
</dbReference>
<dbReference type="InParanoid" id="A0A0D1E015"/>
<dbReference type="OrthoDB" id="10057496at2759"/>
<dbReference type="Proteomes" id="UP000000561">
    <property type="component" value="Chromosome 5"/>
</dbReference>
<dbReference type="GO" id="GO:0005856">
    <property type="term" value="C:cytoskeleton"/>
    <property type="evidence" value="ECO:0007669"/>
    <property type="project" value="UniProtKB-SubCell"/>
</dbReference>
<dbReference type="GO" id="GO:0005768">
    <property type="term" value="C:endosome"/>
    <property type="evidence" value="ECO:0007669"/>
    <property type="project" value="UniProtKB-SubCell"/>
</dbReference>
<dbReference type="GO" id="GO:0016740">
    <property type="term" value="F:transferase activity"/>
    <property type="evidence" value="ECO:0007669"/>
    <property type="project" value="UniProtKB-KW"/>
</dbReference>
<dbReference type="GO" id="GO:0008270">
    <property type="term" value="F:zinc ion binding"/>
    <property type="evidence" value="ECO:0007669"/>
    <property type="project" value="UniProtKB-KW"/>
</dbReference>
<dbReference type="GO" id="GO:0051028">
    <property type="term" value="P:mRNA transport"/>
    <property type="evidence" value="ECO:0007669"/>
    <property type="project" value="UniProtKB-KW"/>
</dbReference>
<dbReference type="CDD" id="cd15730">
    <property type="entry name" value="FYVE_EEA1"/>
    <property type="match status" value="1"/>
</dbReference>
<dbReference type="CDD" id="cd16489">
    <property type="entry name" value="mRING-CH-C4HC2H_ZNRF"/>
    <property type="match status" value="1"/>
</dbReference>
<dbReference type="FunFam" id="3.30.40.10:FF:000510">
    <property type="entry name" value="Phosphatidylinositol 3,5-kinase"/>
    <property type="match status" value="1"/>
</dbReference>
<dbReference type="Gene3D" id="1.25.40.20">
    <property type="entry name" value="Ankyrin repeat-containing domain"/>
    <property type="match status" value="2"/>
</dbReference>
<dbReference type="Gene3D" id="3.30.40.10">
    <property type="entry name" value="Zinc/RING finger domain, C3HC4 (zinc finger)"/>
    <property type="match status" value="2"/>
</dbReference>
<dbReference type="InterPro" id="IPR002110">
    <property type="entry name" value="Ankyrin_rpt"/>
</dbReference>
<dbReference type="InterPro" id="IPR036770">
    <property type="entry name" value="Ankyrin_rpt-contain_sf"/>
</dbReference>
<dbReference type="InterPro" id="IPR000306">
    <property type="entry name" value="Znf_FYVE"/>
</dbReference>
<dbReference type="InterPro" id="IPR017455">
    <property type="entry name" value="Znf_FYVE-rel"/>
</dbReference>
<dbReference type="InterPro" id="IPR011011">
    <property type="entry name" value="Znf_FYVE_PHD"/>
</dbReference>
<dbReference type="InterPro" id="IPR001841">
    <property type="entry name" value="Znf_RING"/>
</dbReference>
<dbReference type="InterPro" id="IPR013083">
    <property type="entry name" value="Znf_RING/FYVE/PHD"/>
</dbReference>
<dbReference type="PANTHER" id="PTHR24171:SF9">
    <property type="entry name" value="ANKYRIN REPEAT DOMAIN-CONTAINING PROTEIN 39"/>
    <property type="match status" value="1"/>
</dbReference>
<dbReference type="PANTHER" id="PTHR24171">
    <property type="entry name" value="ANKYRIN REPEAT DOMAIN-CONTAINING PROTEIN 39-RELATED"/>
    <property type="match status" value="1"/>
</dbReference>
<dbReference type="Pfam" id="PF12796">
    <property type="entry name" value="Ank_2"/>
    <property type="match status" value="1"/>
</dbReference>
<dbReference type="Pfam" id="PF13857">
    <property type="entry name" value="Ank_5"/>
    <property type="match status" value="1"/>
</dbReference>
<dbReference type="Pfam" id="PF01363">
    <property type="entry name" value="FYVE"/>
    <property type="match status" value="1"/>
</dbReference>
<dbReference type="Pfam" id="PF13639">
    <property type="entry name" value="zf-RING_2"/>
    <property type="match status" value="1"/>
</dbReference>
<dbReference type="PRINTS" id="PR01415">
    <property type="entry name" value="ANKYRIN"/>
</dbReference>
<dbReference type="SMART" id="SM00248">
    <property type="entry name" value="ANK"/>
    <property type="match status" value="5"/>
</dbReference>
<dbReference type="SMART" id="SM00064">
    <property type="entry name" value="FYVE"/>
    <property type="match status" value="1"/>
</dbReference>
<dbReference type="SMART" id="SM00184">
    <property type="entry name" value="RING"/>
    <property type="match status" value="1"/>
</dbReference>
<dbReference type="SUPFAM" id="SSF48403">
    <property type="entry name" value="Ankyrin repeat"/>
    <property type="match status" value="1"/>
</dbReference>
<dbReference type="SUPFAM" id="SSF57903">
    <property type="entry name" value="FYVE/PHD zinc finger"/>
    <property type="match status" value="1"/>
</dbReference>
<dbReference type="SUPFAM" id="SSF57850">
    <property type="entry name" value="RING/U-box"/>
    <property type="match status" value="1"/>
</dbReference>
<dbReference type="PROSITE" id="PS50297">
    <property type="entry name" value="ANK_REP_REGION"/>
    <property type="match status" value="1"/>
</dbReference>
<dbReference type="PROSITE" id="PS50088">
    <property type="entry name" value="ANK_REPEAT"/>
    <property type="match status" value="3"/>
</dbReference>
<dbReference type="PROSITE" id="PS50178">
    <property type="entry name" value="ZF_FYVE"/>
    <property type="match status" value="1"/>
</dbReference>
<dbReference type="PROSITE" id="PS50089">
    <property type="entry name" value="ZF_RING_2"/>
    <property type="match status" value="1"/>
</dbReference>
<comment type="function">
    <text evidence="5 6">FYVE zinc finger domain protein that functions in endosomal targeting and transport of mRNAs, as well as associated ribosomes (PubMed:25985087, PubMed:28422978). The endosomal mRNA transport regulates polarity of the infectious hyphae by transporting a broad spectrum of cargo mRNAs from the nucleus to cell poles (PubMed:25985087). Involved in chitinase CTS1 secretion (PubMed:25985087). Dispensable for general endosomal functions but crucial for endosomal recruitment of RRM4 (PubMed:25985087).</text>
</comment>
<comment type="subunit">
    <text evidence="5">Part of large ribonucleoprotein complexes (mRNPs) containing RNA-binding proteins RRM4 and PAB1, endosome-binding protein UPA1, core scaffold protein UPA2 and associated factor GRP1 (PubMed:25985087). Interacts (via PAM2 motif) with PAB1 (via PABC domain) (PubMed:25985087). Interacts (via PAM2L motifs) with RRM4 (PubMed:25985087).</text>
</comment>
<comment type="subcellular location">
    <subcellularLocation>
        <location evidence="5">Cytoplasm</location>
        <location evidence="5">Cytoskeleton</location>
    </subcellularLocation>
    <subcellularLocation>
        <location evidence="5">Endosome</location>
    </subcellularLocation>
    <text evidence="5">Shuttles with endosomes along microtubules (PubMed:25985087). the FYVE domain mediates endosomal localization and endosomal targeting is crucial for its function during polar growth and CTS1 secretion (PubMed:25985087).</text>
</comment>
<comment type="domain">
    <text evidence="5">The FYVE domain is sufficient for endosome interaction.</text>
</comment>
<comment type="domain">
    <text evidence="5">The PAM2 motif interacts specifically with the PABC domain of PAB1, wheareas the 2 PAM2L motifs are involved in the interaction with RRM4.</text>
</comment>
<comment type="disruption phenotype">
    <text evidence="5 6">Causes defects in hyphal growth and secretion of chitinase CTS1, 2 cellular processes that are regulated by RRM4-mediated endosomal mRNA transport.</text>
</comment>
<comment type="similarity">
    <text evidence="8">Belongs to the UPA1 PAM2 domain-binding protein family.</text>
</comment>
<evidence type="ECO:0000255" key="1"/>
<evidence type="ECO:0000255" key="2">
    <source>
        <dbReference type="PROSITE-ProRule" id="PRU00091"/>
    </source>
</evidence>
<evidence type="ECO:0000255" key="3">
    <source>
        <dbReference type="PROSITE-ProRule" id="PRU00175"/>
    </source>
</evidence>
<evidence type="ECO:0000256" key="4">
    <source>
        <dbReference type="SAM" id="MobiDB-lite"/>
    </source>
</evidence>
<evidence type="ECO:0000269" key="5">
    <source>
    </source>
</evidence>
<evidence type="ECO:0000269" key="6">
    <source>
    </source>
</evidence>
<evidence type="ECO:0000303" key="7">
    <source>
    </source>
</evidence>
<evidence type="ECO:0000305" key="8"/>
<gene>
    <name evidence="7" type="primary">UPA1</name>
    <name type="ORF">UMAG_12183</name>
</gene>
<accession>A0A0D1E015</accession>
<organism>
    <name type="scientific">Mycosarcoma maydis</name>
    <name type="common">Corn smut fungus</name>
    <name type="synonym">Ustilago maydis</name>
    <dbReference type="NCBI Taxonomy" id="5270"/>
    <lineage>
        <taxon>Eukaryota</taxon>
        <taxon>Fungi</taxon>
        <taxon>Dikarya</taxon>
        <taxon>Basidiomycota</taxon>
        <taxon>Ustilaginomycotina</taxon>
        <taxon>Ustilaginomycetes</taxon>
        <taxon>Ustilaginales</taxon>
        <taxon>Ustilaginaceae</taxon>
        <taxon>Mycosarcoma</taxon>
    </lineage>
</organism>